<evidence type="ECO:0000255" key="1">
    <source>
        <dbReference type="HAMAP-Rule" id="MF_00456"/>
    </source>
</evidence>
<evidence type="ECO:0000305" key="2"/>
<comment type="function">
    <text evidence="1">Catalyzes the transfer of a phosphate group to glutamate to form L-glutamate 5-phosphate.</text>
</comment>
<comment type="catalytic activity">
    <reaction evidence="1">
        <text>L-glutamate + ATP = L-glutamyl 5-phosphate + ADP</text>
        <dbReference type="Rhea" id="RHEA:14877"/>
        <dbReference type="ChEBI" id="CHEBI:29985"/>
        <dbReference type="ChEBI" id="CHEBI:30616"/>
        <dbReference type="ChEBI" id="CHEBI:58274"/>
        <dbReference type="ChEBI" id="CHEBI:456216"/>
        <dbReference type="EC" id="2.7.2.11"/>
    </reaction>
</comment>
<comment type="pathway">
    <text evidence="1">Amino-acid biosynthesis; L-proline biosynthesis; L-glutamate 5-semialdehyde from L-glutamate: step 1/2.</text>
</comment>
<comment type="subcellular location">
    <subcellularLocation>
        <location evidence="1">Cytoplasm</location>
    </subcellularLocation>
</comment>
<comment type="similarity">
    <text evidence="1">Belongs to the glutamate 5-kinase family.</text>
</comment>
<sequence>MRPGLSAKRLVVKVGSAVLTGERGLDLEAMAEIARQVAALREEGREVVLVSSGAVAAGMRRLGLKERPKDMPKKQALAALGQPLLMAFWQEAFAPFGLPVAQVLLTAEDLSSRSRYLNAKATLRALLDLGAIPVINENDTVAFEEIRFGDNDQLSARVAALVEAGLLALLSDVDALYEEDPKKNPQARPIPEVESVEAVLAHAGEENPLGSGGMKSKLLAARIAGRVGIPTLLLPGKRPGVLLQALSGAPLGTYFHARRRYRGEKAWLFGLLRPKGELVLDRGAVRALKERGASLLPAGVKEVRGRFSRGEAVRLLSEEGEEVGVGLANYASEEIARIKGRRSAEIEAVLGYRYTEEVVHRDHLALKEEA</sequence>
<organism>
    <name type="scientific">Thermus thermophilus (strain ATCC BAA-163 / DSM 7039 / HB27)</name>
    <dbReference type="NCBI Taxonomy" id="262724"/>
    <lineage>
        <taxon>Bacteria</taxon>
        <taxon>Thermotogati</taxon>
        <taxon>Deinococcota</taxon>
        <taxon>Deinococci</taxon>
        <taxon>Thermales</taxon>
        <taxon>Thermaceae</taxon>
        <taxon>Thermus</taxon>
    </lineage>
</organism>
<accession>Q60050</accession>
<reference key="1">
    <citation type="journal article" date="1994" name="FEMS Microbiol. Lett.">
        <title>Molecular cloning and sequence analysis of the proBA operon from an extremely thermophilic eubacterium Thermus thermophilus.</title>
        <authorList>
            <person name="Kosuge T."/>
            <person name="Tabata K."/>
            <person name="Hoshino T."/>
        </authorList>
    </citation>
    <scope>NUCLEOTIDE SEQUENCE [GENOMIC DNA]</scope>
</reference>
<reference key="2">
    <citation type="journal article" date="2004" name="Nat. Biotechnol.">
        <title>The genome sequence of the extreme thermophile Thermus thermophilus.</title>
        <authorList>
            <person name="Henne A."/>
            <person name="Brueggemann H."/>
            <person name="Raasch C."/>
            <person name="Wiezer A."/>
            <person name="Hartsch T."/>
            <person name="Liesegang H."/>
            <person name="Johann A."/>
            <person name="Lienard T."/>
            <person name="Gohl O."/>
            <person name="Martinez-Arias R."/>
            <person name="Jacobi C."/>
            <person name="Starkuviene V."/>
            <person name="Schlenczeck S."/>
            <person name="Dencker S."/>
            <person name="Huber R."/>
            <person name="Klenk H.-P."/>
            <person name="Kramer W."/>
            <person name="Merkl R."/>
            <person name="Gottschalk G."/>
            <person name="Fritz H.-J."/>
        </authorList>
    </citation>
    <scope>NUCLEOTIDE SEQUENCE [LARGE SCALE GENOMIC DNA]</scope>
    <source>
        <strain>ATCC BAA-163 / DSM 7039 / HB27</strain>
    </source>
</reference>
<keyword id="KW-0028">Amino-acid biosynthesis</keyword>
<keyword id="KW-0067">ATP-binding</keyword>
<keyword id="KW-0963">Cytoplasm</keyword>
<keyword id="KW-0418">Kinase</keyword>
<keyword id="KW-0547">Nucleotide-binding</keyword>
<keyword id="KW-0641">Proline biosynthesis</keyword>
<keyword id="KW-0808">Transferase</keyword>
<gene>
    <name evidence="1" type="primary">proB</name>
    <name type="ordered locus">TT_C1563</name>
</gene>
<name>PROB_THET2</name>
<proteinExistence type="inferred from homology"/>
<dbReference type="EC" id="2.7.2.11" evidence="1"/>
<dbReference type="EMBL" id="D29973">
    <property type="protein sequence ID" value="BAA06237.1"/>
    <property type="molecule type" value="Genomic_DNA"/>
</dbReference>
<dbReference type="EMBL" id="AE017221">
    <property type="protein sequence ID" value="AAS81905.1"/>
    <property type="molecule type" value="Genomic_DNA"/>
</dbReference>
<dbReference type="RefSeq" id="WP_008633899.1">
    <property type="nucleotide sequence ID" value="NC_005835.1"/>
</dbReference>
<dbReference type="SMR" id="Q60050"/>
<dbReference type="GeneID" id="3169812"/>
<dbReference type="KEGG" id="tth:TT_C1563"/>
<dbReference type="eggNOG" id="COG0263">
    <property type="taxonomic scope" value="Bacteria"/>
</dbReference>
<dbReference type="HOGENOM" id="CLU_025400_2_0_0"/>
<dbReference type="OrthoDB" id="9804434at2"/>
<dbReference type="UniPathway" id="UPA00098">
    <property type="reaction ID" value="UER00359"/>
</dbReference>
<dbReference type="Proteomes" id="UP000000592">
    <property type="component" value="Chromosome"/>
</dbReference>
<dbReference type="GO" id="GO:0005829">
    <property type="term" value="C:cytosol"/>
    <property type="evidence" value="ECO:0007669"/>
    <property type="project" value="TreeGrafter"/>
</dbReference>
<dbReference type="GO" id="GO:0005524">
    <property type="term" value="F:ATP binding"/>
    <property type="evidence" value="ECO:0007669"/>
    <property type="project" value="UniProtKB-KW"/>
</dbReference>
<dbReference type="GO" id="GO:0004349">
    <property type="term" value="F:glutamate 5-kinase activity"/>
    <property type="evidence" value="ECO:0007669"/>
    <property type="project" value="UniProtKB-UniRule"/>
</dbReference>
<dbReference type="GO" id="GO:0003723">
    <property type="term" value="F:RNA binding"/>
    <property type="evidence" value="ECO:0007669"/>
    <property type="project" value="InterPro"/>
</dbReference>
<dbReference type="GO" id="GO:0055129">
    <property type="term" value="P:L-proline biosynthetic process"/>
    <property type="evidence" value="ECO:0007669"/>
    <property type="project" value="UniProtKB-UniRule"/>
</dbReference>
<dbReference type="CDD" id="cd04242">
    <property type="entry name" value="AAK_G5K_ProB"/>
    <property type="match status" value="1"/>
</dbReference>
<dbReference type="CDD" id="cd21157">
    <property type="entry name" value="PUA_G5K"/>
    <property type="match status" value="1"/>
</dbReference>
<dbReference type="FunFam" id="2.30.130.10:FF:000007">
    <property type="entry name" value="Glutamate 5-kinase"/>
    <property type="match status" value="1"/>
</dbReference>
<dbReference type="FunFam" id="3.40.1160.10:FF:000018">
    <property type="entry name" value="Glutamate 5-kinase"/>
    <property type="match status" value="1"/>
</dbReference>
<dbReference type="Gene3D" id="3.40.1160.10">
    <property type="entry name" value="Acetylglutamate kinase-like"/>
    <property type="match status" value="1"/>
</dbReference>
<dbReference type="Gene3D" id="2.30.130.10">
    <property type="entry name" value="PUA domain"/>
    <property type="match status" value="1"/>
</dbReference>
<dbReference type="HAMAP" id="MF_00456">
    <property type="entry name" value="ProB"/>
    <property type="match status" value="1"/>
</dbReference>
<dbReference type="InterPro" id="IPR036393">
    <property type="entry name" value="AceGlu_kinase-like_sf"/>
</dbReference>
<dbReference type="InterPro" id="IPR001048">
    <property type="entry name" value="Asp/Glu/Uridylate_kinase"/>
</dbReference>
<dbReference type="InterPro" id="IPR041739">
    <property type="entry name" value="G5K_ProB"/>
</dbReference>
<dbReference type="InterPro" id="IPR001057">
    <property type="entry name" value="Glu/AcGlu_kinase"/>
</dbReference>
<dbReference type="InterPro" id="IPR011529">
    <property type="entry name" value="Glu_5kinase"/>
</dbReference>
<dbReference type="InterPro" id="IPR005715">
    <property type="entry name" value="Glu_5kinase/COase_Synthase"/>
</dbReference>
<dbReference type="InterPro" id="IPR019797">
    <property type="entry name" value="Glutamate_5-kinase_CS"/>
</dbReference>
<dbReference type="InterPro" id="IPR002478">
    <property type="entry name" value="PUA"/>
</dbReference>
<dbReference type="InterPro" id="IPR015947">
    <property type="entry name" value="PUA-like_sf"/>
</dbReference>
<dbReference type="InterPro" id="IPR036974">
    <property type="entry name" value="PUA_sf"/>
</dbReference>
<dbReference type="NCBIfam" id="TIGR01027">
    <property type="entry name" value="proB"/>
    <property type="match status" value="1"/>
</dbReference>
<dbReference type="PANTHER" id="PTHR43654">
    <property type="entry name" value="GLUTAMATE 5-KINASE"/>
    <property type="match status" value="1"/>
</dbReference>
<dbReference type="PANTHER" id="PTHR43654:SF1">
    <property type="entry name" value="ISOPENTENYL PHOSPHATE KINASE"/>
    <property type="match status" value="1"/>
</dbReference>
<dbReference type="Pfam" id="PF00696">
    <property type="entry name" value="AA_kinase"/>
    <property type="match status" value="1"/>
</dbReference>
<dbReference type="Pfam" id="PF01472">
    <property type="entry name" value="PUA"/>
    <property type="match status" value="1"/>
</dbReference>
<dbReference type="PIRSF" id="PIRSF000729">
    <property type="entry name" value="GK"/>
    <property type="match status" value="1"/>
</dbReference>
<dbReference type="PRINTS" id="PR00474">
    <property type="entry name" value="GLU5KINASE"/>
</dbReference>
<dbReference type="SMART" id="SM00359">
    <property type="entry name" value="PUA"/>
    <property type="match status" value="1"/>
</dbReference>
<dbReference type="SUPFAM" id="SSF53633">
    <property type="entry name" value="Carbamate kinase-like"/>
    <property type="match status" value="1"/>
</dbReference>
<dbReference type="SUPFAM" id="SSF88697">
    <property type="entry name" value="PUA domain-like"/>
    <property type="match status" value="1"/>
</dbReference>
<dbReference type="PROSITE" id="PS00902">
    <property type="entry name" value="GLUTAMATE_5_KINASE"/>
    <property type="match status" value="1"/>
</dbReference>
<dbReference type="PROSITE" id="PS50890">
    <property type="entry name" value="PUA"/>
    <property type="match status" value="1"/>
</dbReference>
<protein>
    <recommendedName>
        <fullName evidence="1">Glutamate 5-kinase</fullName>
        <ecNumber evidence="1">2.7.2.11</ecNumber>
    </recommendedName>
    <alternativeName>
        <fullName evidence="1">Gamma-glutamyl kinase</fullName>
        <shortName evidence="1">GK</shortName>
    </alternativeName>
</protein>
<feature type="chain" id="PRO_0000109747" description="Glutamate 5-kinase">
    <location>
        <begin position="1"/>
        <end position="370"/>
    </location>
</feature>
<feature type="domain" description="PUA" evidence="1">
    <location>
        <begin position="275"/>
        <end position="353"/>
    </location>
</feature>
<feature type="binding site" evidence="1">
    <location>
        <position position="13"/>
    </location>
    <ligand>
        <name>ATP</name>
        <dbReference type="ChEBI" id="CHEBI:30616"/>
    </ligand>
</feature>
<feature type="binding site" evidence="1">
    <location>
        <position position="52"/>
    </location>
    <ligand>
        <name>substrate</name>
    </ligand>
</feature>
<feature type="binding site" evidence="1">
    <location>
        <position position="139"/>
    </location>
    <ligand>
        <name>substrate</name>
    </ligand>
</feature>
<feature type="binding site" evidence="1">
    <location>
        <position position="151"/>
    </location>
    <ligand>
        <name>substrate</name>
    </ligand>
</feature>
<feature type="binding site" evidence="1">
    <location>
        <begin position="171"/>
        <end position="172"/>
    </location>
    <ligand>
        <name>ATP</name>
        <dbReference type="ChEBI" id="CHEBI:30616"/>
    </ligand>
</feature>
<feature type="binding site" evidence="1">
    <location>
        <begin position="211"/>
        <end position="217"/>
    </location>
    <ligand>
        <name>ATP</name>
        <dbReference type="ChEBI" id="CHEBI:30616"/>
    </ligand>
</feature>
<feature type="sequence conflict" description="In Ref. 1." evidence="2" ref="1">
    <original>MRPGLSAKRLVVKVGSAVLTGERGLDLEAMAE</original>
    <variation>MEFFGLPLRVEEGVLIPRPETEGLVELALGLPLPPAPR</variation>
    <location>
        <begin position="1"/>
        <end position="32"/>
    </location>
</feature>